<gene>
    <name evidence="1" type="primary">ruvA</name>
    <name type="ordered locus">A1C_02895</name>
</gene>
<accession>A8GN94</accession>
<sequence length="203" mass="22091">MIGKLSGKIDAQGDDYIIIDVNGVGYLVYASGKTLGKLSEGEFYKLFIETHVREEHIHLYGFLTIEEKNFFNLLQSVNGIGTRMALSILSNLTPTDIQIAINNEDKDIFKAISGVGAKLAERIVLELKGKVAKISTGAAIINDSLNIKNITSVASNEVIKALVNLGFSRFEAQNSVQGIVIQNPEISIDELIKTALKNRNAGL</sequence>
<proteinExistence type="inferred from homology"/>
<comment type="function">
    <text evidence="1">The RuvA-RuvB-RuvC complex processes Holliday junction (HJ) DNA during genetic recombination and DNA repair, while the RuvA-RuvB complex plays an important role in the rescue of blocked DNA replication forks via replication fork reversal (RFR). RuvA specifically binds to HJ cruciform DNA, conferring on it an open structure. The RuvB hexamer acts as an ATP-dependent pump, pulling dsDNA into and through the RuvAB complex. HJ branch migration allows RuvC to scan DNA until it finds its consensus sequence, where it cleaves and resolves the cruciform DNA.</text>
</comment>
<comment type="subunit">
    <text evidence="1">Homotetramer. Forms an RuvA(8)-RuvB(12)-Holliday junction (HJ) complex. HJ DNA is sandwiched between 2 RuvA tetramers; dsDNA enters through RuvA and exits via RuvB. An RuvB hexamer assembles on each DNA strand where it exits the tetramer. Each RuvB hexamer is contacted by two RuvA subunits (via domain III) on 2 adjacent RuvB subunits; this complex drives branch migration. In the full resolvosome a probable DNA-RuvA(4)-RuvB(12)-RuvC(2) complex forms which resolves the HJ.</text>
</comment>
<comment type="subcellular location">
    <subcellularLocation>
        <location evidence="1">Cytoplasm</location>
    </subcellularLocation>
</comment>
<comment type="domain">
    <text evidence="1">Has three domains with a flexible linker between the domains II and III and assumes an 'L' shape. Domain III is highly mobile and contacts RuvB.</text>
</comment>
<comment type="similarity">
    <text evidence="1">Belongs to the RuvA family.</text>
</comment>
<feature type="chain" id="PRO_1000002535" description="Holliday junction branch migration complex subunit RuvA">
    <location>
        <begin position="1"/>
        <end position="203"/>
    </location>
</feature>
<feature type="region of interest" description="Domain I" evidence="1">
    <location>
        <begin position="1"/>
        <end position="63"/>
    </location>
</feature>
<feature type="region of interest" description="Domain II" evidence="1">
    <location>
        <begin position="64"/>
        <end position="142"/>
    </location>
</feature>
<feature type="region of interest" description="Flexible linker" evidence="1">
    <location>
        <begin position="143"/>
        <end position="149"/>
    </location>
</feature>
<feature type="region of interest" description="Domain III" evidence="1">
    <location>
        <begin position="150"/>
        <end position="203"/>
    </location>
</feature>
<evidence type="ECO:0000255" key="1">
    <source>
        <dbReference type="HAMAP-Rule" id="MF_00031"/>
    </source>
</evidence>
<reference key="1">
    <citation type="submission" date="2007-09" db="EMBL/GenBank/DDBJ databases">
        <title>Complete genome sequence of Rickettsia akari.</title>
        <authorList>
            <person name="Madan A."/>
            <person name="Fahey J."/>
            <person name="Helton E."/>
            <person name="Ketteman M."/>
            <person name="Madan A."/>
            <person name="Rodrigues S."/>
            <person name="Sanchez A."/>
            <person name="Whiting M."/>
            <person name="Dasch G."/>
            <person name="Eremeeva M."/>
        </authorList>
    </citation>
    <scope>NUCLEOTIDE SEQUENCE [LARGE SCALE GENOMIC DNA]</scope>
    <source>
        <strain>Hartford</strain>
    </source>
</reference>
<dbReference type="EMBL" id="CP000847">
    <property type="protein sequence ID" value="ABV74869.1"/>
    <property type="molecule type" value="Genomic_DNA"/>
</dbReference>
<dbReference type="RefSeq" id="WP_012149502.1">
    <property type="nucleotide sequence ID" value="NC_009881.1"/>
</dbReference>
<dbReference type="SMR" id="A8GN94"/>
<dbReference type="STRING" id="293614.A1C_02895"/>
<dbReference type="KEGG" id="rak:A1C_02895"/>
<dbReference type="eggNOG" id="COG0632">
    <property type="taxonomic scope" value="Bacteria"/>
</dbReference>
<dbReference type="HOGENOM" id="CLU_087936_3_0_5"/>
<dbReference type="Proteomes" id="UP000006830">
    <property type="component" value="Chromosome"/>
</dbReference>
<dbReference type="GO" id="GO:0005737">
    <property type="term" value="C:cytoplasm"/>
    <property type="evidence" value="ECO:0007669"/>
    <property type="project" value="UniProtKB-SubCell"/>
</dbReference>
<dbReference type="GO" id="GO:0009379">
    <property type="term" value="C:Holliday junction helicase complex"/>
    <property type="evidence" value="ECO:0007669"/>
    <property type="project" value="InterPro"/>
</dbReference>
<dbReference type="GO" id="GO:0048476">
    <property type="term" value="C:Holliday junction resolvase complex"/>
    <property type="evidence" value="ECO:0007669"/>
    <property type="project" value="UniProtKB-UniRule"/>
</dbReference>
<dbReference type="GO" id="GO:0005524">
    <property type="term" value="F:ATP binding"/>
    <property type="evidence" value="ECO:0007669"/>
    <property type="project" value="InterPro"/>
</dbReference>
<dbReference type="GO" id="GO:0000400">
    <property type="term" value="F:four-way junction DNA binding"/>
    <property type="evidence" value="ECO:0007669"/>
    <property type="project" value="UniProtKB-UniRule"/>
</dbReference>
<dbReference type="GO" id="GO:0009378">
    <property type="term" value="F:four-way junction helicase activity"/>
    <property type="evidence" value="ECO:0007669"/>
    <property type="project" value="InterPro"/>
</dbReference>
<dbReference type="GO" id="GO:0006310">
    <property type="term" value="P:DNA recombination"/>
    <property type="evidence" value="ECO:0007669"/>
    <property type="project" value="UniProtKB-UniRule"/>
</dbReference>
<dbReference type="GO" id="GO:0006281">
    <property type="term" value="P:DNA repair"/>
    <property type="evidence" value="ECO:0007669"/>
    <property type="project" value="UniProtKB-UniRule"/>
</dbReference>
<dbReference type="CDD" id="cd14332">
    <property type="entry name" value="UBA_RuvA_C"/>
    <property type="match status" value="1"/>
</dbReference>
<dbReference type="Gene3D" id="1.10.150.20">
    <property type="entry name" value="5' to 3' exonuclease, C-terminal subdomain"/>
    <property type="match status" value="1"/>
</dbReference>
<dbReference type="Gene3D" id="1.10.8.10">
    <property type="entry name" value="DNA helicase RuvA subunit, C-terminal domain"/>
    <property type="match status" value="1"/>
</dbReference>
<dbReference type="Gene3D" id="2.40.50.140">
    <property type="entry name" value="Nucleic acid-binding proteins"/>
    <property type="match status" value="1"/>
</dbReference>
<dbReference type="HAMAP" id="MF_00031">
    <property type="entry name" value="DNA_HJ_migration_RuvA"/>
    <property type="match status" value="1"/>
</dbReference>
<dbReference type="InterPro" id="IPR013849">
    <property type="entry name" value="DNA_helicase_Holl-junc_RuvA_I"/>
</dbReference>
<dbReference type="InterPro" id="IPR003583">
    <property type="entry name" value="Hlx-hairpin-Hlx_DNA-bd_motif"/>
</dbReference>
<dbReference type="InterPro" id="IPR012340">
    <property type="entry name" value="NA-bd_OB-fold"/>
</dbReference>
<dbReference type="InterPro" id="IPR000085">
    <property type="entry name" value="RuvA"/>
</dbReference>
<dbReference type="InterPro" id="IPR010994">
    <property type="entry name" value="RuvA_2-like"/>
</dbReference>
<dbReference type="InterPro" id="IPR011114">
    <property type="entry name" value="RuvA_C"/>
</dbReference>
<dbReference type="InterPro" id="IPR036267">
    <property type="entry name" value="RuvA_C_sf"/>
</dbReference>
<dbReference type="NCBIfam" id="TIGR00084">
    <property type="entry name" value="ruvA"/>
    <property type="match status" value="1"/>
</dbReference>
<dbReference type="Pfam" id="PF14520">
    <property type="entry name" value="HHH_5"/>
    <property type="match status" value="1"/>
</dbReference>
<dbReference type="Pfam" id="PF07499">
    <property type="entry name" value="RuvA_C"/>
    <property type="match status" value="1"/>
</dbReference>
<dbReference type="Pfam" id="PF01330">
    <property type="entry name" value="RuvA_N"/>
    <property type="match status" value="1"/>
</dbReference>
<dbReference type="SMART" id="SM00278">
    <property type="entry name" value="HhH1"/>
    <property type="match status" value="2"/>
</dbReference>
<dbReference type="SUPFAM" id="SSF46929">
    <property type="entry name" value="DNA helicase RuvA subunit, C-terminal domain"/>
    <property type="match status" value="1"/>
</dbReference>
<dbReference type="SUPFAM" id="SSF50249">
    <property type="entry name" value="Nucleic acid-binding proteins"/>
    <property type="match status" value="1"/>
</dbReference>
<dbReference type="SUPFAM" id="SSF47781">
    <property type="entry name" value="RuvA domain 2-like"/>
    <property type="match status" value="1"/>
</dbReference>
<organism>
    <name type="scientific">Rickettsia akari (strain Hartford)</name>
    <dbReference type="NCBI Taxonomy" id="293614"/>
    <lineage>
        <taxon>Bacteria</taxon>
        <taxon>Pseudomonadati</taxon>
        <taxon>Pseudomonadota</taxon>
        <taxon>Alphaproteobacteria</taxon>
        <taxon>Rickettsiales</taxon>
        <taxon>Rickettsiaceae</taxon>
        <taxon>Rickettsieae</taxon>
        <taxon>Rickettsia</taxon>
        <taxon>spotted fever group</taxon>
    </lineage>
</organism>
<name>RUVA_RICAH</name>
<keyword id="KW-0963">Cytoplasm</keyword>
<keyword id="KW-0227">DNA damage</keyword>
<keyword id="KW-0233">DNA recombination</keyword>
<keyword id="KW-0234">DNA repair</keyword>
<keyword id="KW-0238">DNA-binding</keyword>
<protein>
    <recommendedName>
        <fullName evidence="1">Holliday junction branch migration complex subunit RuvA</fullName>
    </recommendedName>
</protein>